<sequence length="62" mass="6928">MAKVCYFTGRKTVSGNNRSHAMNQTKRTVKPNLQKVTILVDGKPKKVWASARALKSGKVERI</sequence>
<proteinExistence type="inferred from homology"/>
<gene>
    <name evidence="1" type="primary">rpmB</name>
    <name type="ordered locus">MGAS10750_Spy1662</name>
</gene>
<reference key="1">
    <citation type="journal article" date="2006" name="Proc. Natl. Acad. Sci. U.S.A.">
        <title>Molecular genetic anatomy of inter- and intraserotype variation in the human bacterial pathogen group A Streptococcus.</title>
        <authorList>
            <person name="Beres S.B."/>
            <person name="Richter E.W."/>
            <person name="Nagiec M.J."/>
            <person name="Sumby P."/>
            <person name="Porcella S.F."/>
            <person name="DeLeo F.R."/>
            <person name="Musser J.M."/>
        </authorList>
    </citation>
    <scope>NUCLEOTIDE SEQUENCE [LARGE SCALE GENOMIC DNA]</scope>
    <source>
        <strain>MGAS10750</strain>
    </source>
</reference>
<comment type="similarity">
    <text evidence="1">Belongs to the bacterial ribosomal protein bL28 family.</text>
</comment>
<feature type="chain" id="PRO_1000007373" description="Large ribosomal subunit protein bL28">
    <location>
        <begin position="1"/>
        <end position="62"/>
    </location>
</feature>
<organism>
    <name type="scientific">Streptococcus pyogenes serotype M4 (strain MGAS10750)</name>
    <dbReference type="NCBI Taxonomy" id="370554"/>
    <lineage>
        <taxon>Bacteria</taxon>
        <taxon>Bacillati</taxon>
        <taxon>Bacillota</taxon>
        <taxon>Bacilli</taxon>
        <taxon>Lactobacillales</taxon>
        <taxon>Streptococcaceae</taxon>
        <taxon>Streptococcus</taxon>
    </lineage>
</organism>
<name>RL28_STRPF</name>
<accession>Q1J4X4</accession>
<dbReference type="EMBL" id="CP000262">
    <property type="protein sequence ID" value="ABF38612.1"/>
    <property type="molecule type" value="Genomic_DNA"/>
</dbReference>
<dbReference type="SMR" id="Q1J4X4"/>
<dbReference type="KEGG" id="spi:MGAS10750_Spy1662"/>
<dbReference type="HOGENOM" id="CLU_064548_7_1_9"/>
<dbReference type="Proteomes" id="UP000002434">
    <property type="component" value="Chromosome"/>
</dbReference>
<dbReference type="GO" id="GO:1990904">
    <property type="term" value="C:ribonucleoprotein complex"/>
    <property type="evidence" value="ECO:0007669"/>
    <property type="project" value="UniProtKB-KW"/>
</dbReference>
<dbReference type="GO" id="GO:0005840">
    <property type="term" value="C:ribosome"/>
    <property type="evidence" value="ECO:0007669"/>
    <property type="project" value="UniProtKB-KW"/>
</dbReference>
<dbReference type="GO" id="GO:0003735">
    <property type="term" value="F:structural constituent of ribosome"/>
    <property type="evidence" value="ECO:0007669"/>
    <property type="project" value="InterPro"/>
</dbReference>
<dbReference type="GO" id="GO:0006412">
    <property type="term" value="P:translation"/>
    <property type="evidence" value="ECO:0007669"/>
    <property type="project" value="UniProtKB-UniRule"/>
</dbReference>
<dbReference type="Gene3D" id="2.30.170.40">
    <property type="entry name" value="Ribosomal protein L28/L24"/>
    <property type="match status" value="1"/>
</dbReference>
<dbReference type="HAMAP" id="MF_00373">
    <property type="entry name" value="Ribosomal_bL28"/>
    <property type="match status" value="1"/>
</dbReference>
<dbReference type="InterPro" id="IPR050096">
    <property type="entry name" value="Bacterial_rp_bL28"/>
</dbReference>
<dbReference type="InterPro" id="IPR026569">
    <property type="entry name" value="Ribosomal_bL28"/>
</dbReference>
<dbReference type="InterPro" id="IPR034704">
    <property type="entry name" value="Ribosomal_bL28/bL31-like_sf"/>
</dbReference>
<dbReference type="InterPro" id="IPR001383">
    <property type="entry name" value="Ribosomal_bL28_bact-type"/>
</dbReference>
<dbReference type="InterPro" id="IPR037147">
    <property type="entry name" value="Ribosomal_bL28_sf"/>
</dbReference>
<dbReference type="NCBIfam" id="TIGR00009">
    <property type="entry name" value="L28"/>
    <property type="match status" value="1"/>
</dbReference>
<dbReference type="PANTHER" id="PTHR39080">
    <property type="entry name" value="50S RIBOSOMAL PROTEIN L28"/>
    <property type="match status" value="1"/>
</dbReference>
<dbReference type="PANTHER" id="PTHR39080:SF1">
    <property type="entry name" value="LARGE RIBOSOMAL SUBUNIT PROTEIN BL28A"/>
    <property type="match status" value="1"/>
</dbReference>
<dbReference type="Pfam" id="PF00830">
    <property type="entry name" value="Ribosomal_L28"/>
    <property type="match status" value="1"/>
</dbReference>
<dbReference type="SUPFAM" id="SSF143800">
    <property type="entry name" value="L28p-like"/>
    <property type="match status" value="1"/>
</dbReference>
<protein>
    <recommendedName>
        <fullName evidence="1">Large ribosomal subunit protein bL28</fullName>
    </recommendedName>
    <alternativeName>
        <fullName evidence="2">50S ribosomal protein L28</fullName>
    </alternativeName>
</protein>
<evidence type="ECO:0000255" key="1">
    <source>
        <dbReference type="HAMAP-Rule" id="MF_00373"/>
    </source>
</evidence>
<evidence type="ECO:0000305" key="2"/>
<keyword id="KW-0687">Ribonucleoprotein</keyword>
<keyword id="KW-0689">Ribosomal protein</keyword>